<organism>
    <name type="scientific">Homo sapiens</name>
    <name type="common">Human</name>
    <dbReference type="NCBI Taxonomy" id="9606"/>
    <lineage>
        <taxon>Eukaryota</taxon>
        <taxon>Metazoa</taxon>
        <taxon>Chordata</taxon>
        <taxon>Craniata</taxon>
        <taxon>Vertebrata</taxon>
        <taxon>Euteleostomi</taxon>
        <taxon>Mammalia</taxon>
        <taxon>Eutheria</taxon>
        <taxon>Euarchontoglires</taxon>
        <taxon>Primates</taxon>
        <taxon>Haplorrhini</taxon>
        <taxon>Catarrhini</taxon>
        <taxon>Hominidae</taxon>
        <taxon>Homo</taxon>
    </lineage>
</organism>
<reference key="1">
    <citation type="submission" date="1999-04" db="EMBL/GenBank/DDBJ databases">
        <title>Molecular cloning of human oligophrenin-1 like (OPHN1L) gene, complete CDS.</title>
        <authorList>
            <person name="Xia J.H."/>
            <person name="Tang X.X."/>
            <person name="Yu K.P."/>
            <person name="Pan Q."/>
            <person name="Dai H.P."/>
        </authorList>
    </citation>
    <scope>NUCLEOTIDE SEQUENCE [MRNA] (ISOFORM 1)</scope>
    <source>
        <tissue>Heart</tissue>
        <tissue>Liver</tissue>
        <tissue>Placenta</tissue>
    </source>
</reference>
<reference key="2">
    <citation type="journal article" date="2000" name="Proc. Natl. Acad. Sci. U.S.A.">
        <title>The human GRAF gene is fused to MLL in a unique t(5;11)(q31;q23) and both alleles are disrupted in three cases of myelodysplastic syndrome/acute myeloid leukemia with a deletion 5q.</title>
        <authorList>
            <person name="Borkhardt A."/>
            <person name="Bojesen S."/>
            <person name="Haas O.A."/>
            <person name="Fuchs U."/>
            <person name="Bartelheimer D."/>
            <person name="Loncarevic I.F."/>
            <person name="Bohle R.M."/>
            <person name="Harbott J."/>
            <person name="Repp R."/>
            <person name="Jaeger U."/>
            <person name="Viehmann S."/>
            <person name="Henn T."/>
            <person name="Korth P."/>
            <person name="Scharr D."/>
            <person name="Lampert F."/>
        </authorList>
    </citation>
    <scope>NUCLEOTIDE SEQUENCE [GENOMIC DNA] (ISOFORM 2)</scope>
    <scope>DISEASE</scope>
    <scope>VARIANT JMML SER-417</scope>
</reference>
<reference key="3">
    <citation type="submission" date="2005-09" db="EMBL/GenBank/DDBJ databases">
        <authorList>
            <person name="Mural R.J."/>
            <person name="Istrail S."/>
            <person name="Sutton G.G."/>
            <person name="Florea L."/>
            <person name="Halpern A.L."/>
            <person name="Mobarry C.M."/>
            <person name="Lippert R."/>
            <person name="Walenz B."/>
            <person name="Shatkay H."/>
            <person name="Dew I."/>
            <person name="Miller J.R."/>
            <person name="Flanigan M.J."/>
            <person name="Edwards N.J."/>
            <person name="Bolanos R."/>
            <person name="Fasulo D."/>
            <person name="Halldorsson B.V."/>
            <person name="Hannenhalli S."/>
            <person name="Turner R."/>
            <person name="Yooseph S."/>
            <person name="Lu F."/>
            <person name="Nusskern D.R."/>
            <person name="Shue B.C."/>
            <person name="Zheng X.H."/>
            <person name="Zhong F."/>
            <person name="Delcher A.L."/>
            <person name="Huson D.H."/>
            <person name="Kravitz S.A."/>
            <person name="Mouchard L."/>
            <person name="Reinert K."/>
            <person name="Remington K.A."/>
            <person name="Clark A.G."/>
            <person name="Waterman M.S."/>
            <person name="Eichler E.E."/>
            <person name="Adams M.D."/>
            <person name="Hunkapiller M.W."/>
            <person name="Myers E.W."/>
            <person name="Venter J.C."/>
        </authorList>
    </citation>
    <scope>NUCLEOTIDE SEQUENCE [LARGE SCALE GENOMIC DNA]</scope>
</reference>
<reference key="4">
    <citation type="journal article" date="2004" name="Genome Res.">
        <title>The status, quality, and expansion of the NIH full-length cDNA project: the Mammalian Gene Collection (MGC).</title>
        <authorList>
            <consortium name="The MGC Project Team"/>
        </authorList>
    </citation>
    <scope>NUCLEOTIDE SEQUENCE [LARGE SCALE MRNA] (ISOFORM 2)</scope>
    <source>
        <tissue>Placenta</tissue>
    </source>
</reference>
<reference key="5">
    <citation type="submission" date="2001-01" db="EMBL/GenBank/DDBJ databases">
        <title>Genomic structure of the human GRAF gene.</title>
        <authorList>
            <person name="Bojesen S.E."/>
            <person name="Link C."/>
            <person name="Borkhardt A."/>
        </authorList>
    </citation>
    <scope>NUCLEOTIDE SEQUENCE [GENOMIC DNA] OF 53-785</scope>
</reference>
<reference key="6">
    <citation type="journal article" date="1998" name="DNA Res.">
        <title>Prediction of the coding sequences of unidentified human genes. X. The complete sequences of 100 new cDNA clones from brain which can code for large proteins in vitro.</title>
        <authorList>
            <person name="Ishikawa K."/>
            <person name="Nagase T."/>
            <person name="Suyama M."/>
            <person name="Miyajima N."/>
            <person name="Tanaka A."/>
            <person name="Kotani H."/>
            <person name="Nomura N."/>
            <person name="Ohara O."/>
        </authorList>
    </citation>
    <scope>NUCLEOTIDE SEQUENCE [LARGE SCALE MRNA] OF 62-814 (ISOFORM 1)</scope>
    <source>
        <tissue>Brain</tissue>
    </source>
</reference>
<reference key="7">
    <citation type="journal article" date="2014" name="J. Proteomics">
        <title>An enzyme assisted RP-RPLC approach for in-depth analysis of human liver phosphoproteome.</title>
        <authorList>
            <person name="Bian Y."/>
            <person name="Song C."/>
            <person name="Cheng K."/>
            <person name="Dong M."/>
            <person name="Wang F."/>
            <person name="Huang J."/>
            <person name="Sun D."/>
            <person name="Wang L."/>
            <person name="Ye M."/>
            <person name="Zou H."/>
        </authorList>
    </citation>
    <scope>IDENTIFICATION BY MASS SPECTROMETRY [LARGE SCALE ANALYSIS]</scope>
    <source>
        <tissue>Liver</tissue>
    </source>
</reference>
<reference key="8">
    <citation type="journal article" date="2016" name="J. Virol.">
        <title>Graf1 Controls the Growth of Human Parainfluenza Virus Type 2 through Inactivation of RhoA Signaling.</title>
        <authorList>
            <person name="Ohta K."/>
            <person name="Goto H."/>
            <person name="Matsumoto Y."/>
            <person name="Yumine N."/>
            <person name="Tsurudome M."/>
            <person name="Nishio M."/>
        </authorList>
    </citation>
    <scope>FUNCTION</scope>
    <scope>SUBCELLULAR LOCATION</scope>
    <scope>INTERACTION WITH HPIV-2 VIRUS PROTEINS P AND V (MICROBIAL INFECTION)</scope>
</reference>
<reference key="9">
    <citation type="journal article" date="2020" name="J. Cell Biol.">
        <title>GRAF2, WDR44, and MICAL1 mediate Rab8/10/11-dependent export of E-cadherin, MMP14, and CFTR DeltaF508.</title>
        <authorList>
            <person name="Lucken-Ardjomande Haesler S."/>
            <person name="Vallis Y."/>
            <person name="Pasche M."/>
            <person name="McMahon H.T."/>
        </authorList>
    </citation>
    <scope>FUNCTION</scope>
    <scope>INTERACTION WITH WDR44 AND MICAL1</scope>
    <scope>SUBCELLULAR LOCATION</scope>
    <scope>DOMAIN</scope>
</reference>
<reference key="10">
    <citation type="journal article" date="2023" name="Nat. Commun.">
        <title>GRAF1 integrates PINK1-Parkin signaling and actin dynamics to mediate cardiac mitochondrial homeostasis.</title>
        <authorList>
            <person name="Zhu Q."/>
            <person name="Combs M.E."/>
            <person name="Liu J."/>
            <person name="Bai X."/>
            <person name="Wang W.B."/>
            <person name="Herring L.E."/>
            <person name="Liu J."/>
            <person name="Locasale J.W."/>
            <person name="Bowles D.E."/>
            <person name="Gross R.T."/>
            <person name="Pla M.M."/>
            <person name="Mack C.P."/>
            <person name="Taylor J.M."/>
        </authorList>
    </citation>
    <scope>FUNCTION</scope>
    <scope>SUBCELLULAR LOCATION</scope>
    <scope>PHOSPHORYLATION AT SER-668; THR-670 AND SER-671</scope>
    <scope>MUTAGENESIS OF SER-668 AND SER-671</scope>
    <scope>INTERACTION WITH ABI2</scope>
</reference>
<reference key="11">
    <citation type="submission" date="2003-12" db="PDB data bank">
        <title>Solution structure of the SH3 domain of human oligophrenin-1-like protein (KIAA0621).</title>
        <authorList>
            <consortium name="RIKEN structural genomics initiative (RSGI)"/>
        </authorList>
    </citation>
    <scope>STRUCTURE BY NMR OF 754-814</scope>
</reference>
<keyword id="KW-0002">3D-structure</keyword>
<keyword id="KW-0025">Alternative splicing</keyword>
<keyword id="KW-0965">Cell junction</keyword>
<keyword id="KW-0160">Chromosomal rearrangement</keyword>
<keyword id="KW-0963">Cytoplasm</keyword>
<keyword id="KW-0206">Cytoskeleton</keyword>
<keyword id="KW-0225">Disease variant</keyword>
<keyword id="KW-0967">Endosome</keyword>
<keyword id="KW-0343">GTPase activation</keyword>
<keyword id="KW-0472">Membrane</keyword>
<keyword id="KW-0597">Phosphoprotein</keyword>
<keyword id="KW-1267">Proteomics identification</keyword>
<keyword id="KW-0656">Proto-oncogene</keyword>
<keyword id="KW-1185">Reference proteome</keyword>
<keyword id="KW-0728">SH3 domain</keyword>
<sequence>MGLPALEFSDCCLDSPHFRETLKSHEAELDKTNKFIKELIKDGKSLISALKNLSSAKRKFADSLNEFKFQCIGDAETDDEMCIARSLQEFATVLRNLEDERIRMIENASEVLITPLEKFRKEQIGAAKEAKKKYDKETEKYCGILEKHLNLSSKKKESQLQEADSQVDLVRQHFYEVSLEYVFKVQEVQERKMFEFVEPLLAFLQGLFTFYHHGYELAKDFGDFKTQLTISIQNTRNRFEGTRSEVESLMKKMKENPLEHKTISPYTMEGYLYVQEKRHFGTSWVKHYCTYQRDSKQITMVPFDQKSGGKGGEDESVILKSCTRRKTDSIEKRFCFDVEAVDRPGVITMQALSEEDRRLWMEAMDGREPVYNSNKDSQSEGTAQLDSIGFSIIRKCIHAVETRGINEQGLYRIVGVNSRVQKLLSVLMDPKTASETETDICAEWEIKTITSALKTYLRMLPGPLMMYQFQRSFIKAAKLENQESRVSEIHSLVHRLPEKNRQMLQLLMNHLANVANNHKQNLMTVANLGVVFGPTLLRPQEETVAAIMDIKFQNIVIEILIENHEKIFNTVPDMPLTNAQLHLSRKKSSDSKPPSCSERPLTLFHTVQSTEKQEQRNSIINSSLESVSSNPNSILNSSSSLQPNMNSSDPDLAVVKPTRPNSLPPNPSPTSPLSPSWPMFSAPSSPMPTSSTSSDSSPVRSVAGFVWFSVAAVVLSLARSSLHAVFSLLVNFVPCHPNLHLLFDRPEEAVHEDSSTPFRKAKALYACKAEHDSELSFTAGTVFDNVHPSQEPGWLEGTLNGKTGLIPENYVEFL</sequence>
<evidence type="ECO:0000250" key="1"/>
<evidence type="ECO:0000250" key="2">
    <source>
        <dbReference type="UniProtKB" id="Q5ZMW5"/>
    </source>
</evidence>
<evidence type="ECO:0000250" key="3">
    <source>
        <dbReference type="UniProtKB" id="Q6ZQ82"/>
    </source>
</evidence>
<evidence type="ECO:0000255" key="4">
    <source>
        <dbReference type="PROSITE-ProRule" id="PRU00145"/>
    </source>
</evidence>
<evidence type="ECO:0000255" key="5">
    <source>
        <dbReference type="PROSITE-ProRule" id="PRU00172"/>
    </source>
</evidence>
<evidence type="ECO:0000255" key="6">
    <source>
        <dbReference type="PROSITE-ProRule" id="PRU00192"/>
    </source>
</evidence>
<evidence type="ECO:0000255" key="7">
    <source>
        <dbReference type="PROSITE-ProRule" id="PRU00361"/>
    </source>
</evidence>
<evidence type="ECO:0000256" key="8">
    <source>
        <dbReference type="SAM" id="MobiDB-lite"/>
    </source>
</evidence>
<evidence type="ECO:0000269" key="9">
    <source>
    </source>
</evidence>
<evidence type="ECO:0000269" key="10">
    <source>
    </source>
</evidence>
<evidence type="ECO:0000269" key="11">
    <source>
    </source>
</evidence>
<evidence type="ECO:0000269" key="12">
    <source>
    </source>
</evidence>
<evidence type="ECO:0000303" key="13">
    <source>
    </source>
</evidence>
<evidence type="ECO:0000303" key="14">
    <source>
    </source>
</evidence>
<evidence type="ECO:0000305" key="15"/>
<evidence type="ECO:0007829" key="16">
    <source>
        <dbReference type="PDB" id="1UGV"/>
    </source>
</evidence>
<feature type="chain" id="PRO_0000056718" description="Rho GTPase-activating protein 26">
    <location>
        <begin position="1"/>
        <end position="814"/>
    </location>
</feature>
<feature type="domain" description="BAR" evidence="7">
    <location>
        <begin position="7"/>
        <end position="262"/>
    </location>
</feature>
<feature type="domain" description="PH" evidence="4">
    <location>
        <begin position="265"/>
        <end position="369"/>
    </location>
</feature>
<feature type="domain" description="Rho-GAP" evidence="5">
    <location>
        <begin position="383"/>
        <end position="568"/>
    </location>
</feature>
<feature type="domain" description="SH3" evidence="6">
    <location>
        <begin position="756"/>
        <end position="814"/>
    </location>
</feature>
<feature type="region of interest" description="Disordered" evidence="8">
    <location>
        <begin position="624"/>
        <end position="696"/>
    </location>
</feature>
<feature type="compositionally biased region" description="Low complexity" evidence="8">
    <location>
        <begin position="624"/>
        <end position="648"/>
    </location>
</feature>
<feature type="compositionally biased region" description="Pro residues" evidence="8">
    <location>
        <begin position="662"/>
        <end position="672"/>
    </location>
</feature>
<feature type="compositionally biased region" description="Low complexity" evidence="8">
    <location>
        <begin position="673"/>
        <end position="696"/>
    </location>
</feature>
<feature type="site" description="Arginine finger; crucial for GTP hydrolysis by stabilizing the transition state" evidence="5">
    <location>
        <position position="412"/>
    </location>
</feature>
<feature type="modified residue" description="Phosphoserine" evidence="12">
    <location>
        <position position="668"/>
    </location>
</feature>
<feature type="modified residue" description="Phosphothreonine" evidence="12">
    <location>
        <position position="670"/>
    </location>
</feature>
<feature type="modified residue" description="Phosphoserine" evidence="12">
    <location>
        <position position="671"/>
    </location>
</feature>
<feature type="splice variant" id="VSP_001659" description="In isoform 2." evidence="13">
    <location>
        <begin position="700"/>
        <end position="754"/>
    </location>
</feature>
<feature type="sequence variant" id="VAR_013623" description="In JMML; somatic mutation; dbSNP:rs121918546." evidence="9">
    <original>N</original>
    <variation>S</variation>
    <location>
        <position position="417"/>
    </location>
</feature>
<feature type="mutagenesis site" description="Significantly reduced PINK1-mediated phosphorylation." evidence="12">
    <original>S</original>
    <variation>A</variation>
    <location>
        <position position="668"/>
    </location>
</feature>
<feature type="mutagenesis site" description="Significantly reduced PINK1-mediated phosphorylation." evidence="12">
    <original>S</original>
    <variation>A</variation>
    <location>
        <position position="671"/>
    </location>
</feature>
<feature type="sequence conflict" description="In Ref. 2; CAA71414 and 3; CAC29145/CAC29146." evidence="15" ref="2 3">
    <original>E</original>
    <variation>G</variation>
    <location>
        <position position="355"/>
    </location>
</feature>
<feature type="strand" evidence="16">
    <location>
        <begin position="761"/>
        <end position="765"/>
    </location>
</feature>
<feature type="strand" evidence="16">
    <location>
        <begin position="771"/>
        <end position="774"/>
    </location>
</feature>
<feature type="strand" evidence="16">
    <location>
        <begin position="782"/>
        <end position="785"/>
    </location>
</feature>
<feature type="strand" evidence="16">
    <location>
        <begin position="794"/>
        <end position="801"/>
    </location>
</feature>
<feature type="strand" evidence="16">
    <location>
        <begin position="803"/>
        <end position="807"/>
    </location>
</feature>
<feature type="helix" evidence="16">
    <location>
        <begin position="808"/>
        <end position="810"/>
    </location>
</feature>
<feature type="strand" evidence="16">
    <location>
        <begin position="811"/>
        <end position="813"/>
    </location>
</feature>
<accession>Q9UNA1</accession>
<accession>O75117</accession>
<accession>Q5D035</accession>
<accession>Q9BYS6</accession>
<accession>Q9BYS7</accession>
<accession>Q9UJ00</accession>
<comment type="function">
    <text evidence="10 12">GTPase-activating protein for RHOA and CDC42. Facilitates mitochondrial quality control by promoting Parkin-mediated recruitment of autophagosomes to damaged mitochondria (PubMed:38081847). Negatively regulates the growth of human parainfluenza virus type 2 by inhibiting hPIV-2-mediated RHOA activation via interaction with two of its viral proteins P and V (PubMed:27512058).</text>
</comment>
<comment type="function">
    <molecule>Isoform 2</molecule>
    <text evidence="11">Associates with MICAL1 on the endosomal membrane to promote Rab8-Rab10-dependent tubule extension. After dissociation of MICAL1, recruits WDR44 which connects the endoplasmic reticulum (ER) with the endosomal tubule, thereby participating in the export of a subset of neosynthesized proteins.</text>
</comment>
<comment type="subunit">
    <molecule>Isoform 2</molecule>
    <text evidence="2 3 11">Interacts with NYAP1, NYAP2 and MYO16 (By similarity). Interacts with MICAL1 and WDR44 (PubMed:32344433). Binds to the C-terminus of PTK2/FAK1 (By similarity).</text>
</comment>
<comment type="subunit">
    <text evidence="10">(Microbial infection) Interacts with human parainfluenza virus type 2 proteins P and V.</text>
</comment>
<comment type="interaction">
    <interactant intactId="EBI-1390913">
        <id>Q9UNA1</id>
    </interactant>
    <interactant intactId="EBI-3438291">
        <id>O14613</id>
        <label>CDC42EP2</label>
    </interactant>
    <organismsDiffer>false</organismsDiffer>
    <experiments>3</experiments>
</comment>
<comment type="interaction">
    <interactant intactId="EBI-1390913">
        <id>Q9UNA1</id>
    </interactant>
    <interactant intactId="EBI-1384335">
        <id>Q6P5Z2</id>
        <label>PKN3</label>
    </interactant>
    <organismsDiffer>false</organismsDiffer>
    <experiments>5</experiments>
</comment>
<comment type="interaction">
    <interactant intactId="EBI-16430964">
        <id>Q9UNA1-2</id>
    </interactant>
    <interactant intactId="EBI-3438291">
        <id>O14613</id>
        <label>CDC42EP2</label>
    </interactant>
    <organismsDiffer>false</organismsDiffer>
    <experiments>3</experiments>
</comment>
<comment type="subcellular location">
    <molecule>Isoform 2</molecule>
    <subcellularLocation>
        <location evidence="11">Endosome membrane</location>
    </subcellularLocation>
    <text evidence="11">Colocalized with RAB8A, RAB8B and RAB10 on endosomal tubules.</text>
</comment>
<comment type="subcellular location">
    <subcellularLocation>
        <location evidence="10 12">Cytoplasm</location>
    </subcellularLocation>
    <subcellularLocation>
        <location evidence="1">Cell junction</location>
        <location evidence="1">Focal adhesion</location>
    </subcellularLocation>
    <subcellularLocation>
        <location evidence="1">Cytoplasm</location>
        <location evidence="1">Cytoskeleton</location>
    </subcellularLocation>
    <text evidence="1">Colocalizes with actin stress fibers and cortical actin structures.</text>
</comment>
<comment type="alternative products">
    <event type="alternative splicing"/>
    <isoform>
        <id>Q9UNA1-1</id>
        <name>1</name>
        <sequence type="displayed"/>
    </isoform>
    <isoform>
        <id>Q9UNA1-2</id>
        <name>2</name>
        <name evidence="14">GRAF1b</name>
        <sequence type="described" ref="VSP_001659"/>
    </isoform>
</comment>
<comment type="domain">
    <text evidence="11">The BAR domain is important to associate RAB8A (or RAB8B) and RAB10 to endosomal membrane to promote tubule extension. The BAR domain is also important to recruit WDR44 to endosomal tubules.</text>
</comment>
<comment type="PTM">
    <text evidence="12">Phosphorylated in a PINK1-dependent fashion promoting retrograde mitochondrial trafficking and clustering.</text>
</comment>
<comment type="disease">
    <disease id="DI-01851">
        <name>Leukemia, juvenile myelomonocytic</name>
        <acronym>JMML</acronym>
        <description>An aggressive pediatric myelodysplastic syndrome/myeloproliferative disorder characterized by malignant transformation in the hematopoietic stem cell compartment with proliferation of differentiated progeny. Patients have splenomegaly, enlarged lymph nodes, rashes, and hemorrhages.</description>
        <dbReference type="MIM" id="607785"/>
    </disease>
    <text evidence="9">The gene represented in this entry is involved in disease pathogenesis. A chromosomal translocation t(5;11)(q31;q23) with KMT2A/MLL1 has been found in leukemic cells from JMML patients, also carrying inactivating mutations on the second allele (PubMed:10908648).</text>
</comment>
<comment type="online information" name="Atlas of Genetics and Cytogenetics in Oncology and Haematology">
    <link uri="https://atlasgeneticsoncology.org/gene/291/GRAF"/>
</comment>
<comment type="online information" name="Wikipedia">
    <link uri="https://en.wikipedia.org/wiki/Graf1"/>
    <text>Graf1 entry</text>
</comment>
<gene>
    <name type="primary">ARHGAP26</name>
    <name type="synonym">GRAF</name>
    <name type="synonym">KIAA0621</name>
    <name type="synonym">OPHN1L</name>
</gene>
<protein>
    <recommendedName>
        <fullName>Rho GTPase-activating protein 26</fullName>
    </recommendedName>
    <alternativeName>
        <fullName>GTPase regulator associated with focal adhesion kinase</fullName>
        <shortName evidence="14">GRAF1</shortName>
    </alternativeName>
    <alternativeName>
        <fullName>Oligophrenin-1-like protein</fullName>
    </alternativeName>
    <alternativeName>
        <fullName>Rho-type GTPase-activating protein 26</fullName>
    </alternativeName>
</protein>
<name>RHG26_HUMAN</name>
<proteinExistence type="evidence at protein level"/>
<dbReference type="EMBL" id="AF141884">
    <property type="protein sequence ID" value="AAD39482.1"/>
    <property type="molecule type" value="mRNA"/>
</dbReference>
<dbReference type="EMBL" id="Y10388">
    <property type="protein sequence ID" value="CAA71414.2"/>
    <property type="molecule type" value="Genomic_DNA"/>
</dbReference>
<dbReference type="EMBL" id="CH471062">
    <property type="protein sequence ID" value="EAW61876.1"/>
    <property type="molecule type" value="Genomic_DNA"/>
</dbReference>
<dbReference type="EMBL" id="BC068555">
    <property type="protein sequence ID" value="AAH68555.1"/>
    <property type="molecule type" value="mRNA"/>
</dbReference>
<dbReference type="EMBL" id="AJ309466">
    <property type="protein sequence ID" value="CAC29145.2"/>
    <property type="molecule type" value="Genomic_DNA"/>
</dbReference>
<dbReference type="EMBL" id="AJ309467">
    <property type="protein sequence ID" value="CAC29145.2"/>
    <property type="status" value="JOINED"/>
    <property type="molecule type" value="Genomic_DNA"/>
</dbReference>
<dbReference type="EMBL" id="AJ309468">
    <property type="protein sequence ID" value="CAC29145.2"/>
    <property type="status" value="JOINED"/>
    <property type="molecule type" value="Genomic_DNA"/>
</dbReference>
<dbReference type="EMBL" id="AJ309469">
    <property type="protein sequence ID" value="CAC29145.2"/>
    <property type="status" value="JOINED"/>
    <property type="molecule type" value="Genomic_DNA"/>
</dbReference>
<dbReference type="EMBL" id="AJ309470">
    <property type="protein sequence ID" value="CAC29145.2"/>
    <property type="status" value="JOINED"/>
    <property type="molecule type" value="Genomic_DNA"/>
</dbReference>
<dbReference type="EMBL" id="AJ309471">
    <property type="protein sequence ID" value="CAC29145.2"/>
    <property type="status" value="JOINED"/>
    <property type="molecule type" value="Genomic_DNA"/>
</dbReference>
<dbReference type="EMBL" id="AJ309472">
    <property type="protein sequence ID" value="CAC29145.2"/>
    <property type="status" value="JOINED"/>
    <property type="molecule type" value="Genomic_DNA"/>
</dbReference>
<dbReference type="EMBL" id="AJ309473">
    <property type="protein sequence ID" value="CAC29145.2"/>
    <property type="status" value="JOINED"/>
    <property type="molecule type" value="Genomic_DNA"/>
</dbReference>
<dbReference type="EMBL" id="AJ309474">
    <property type="protein sequence ID" value="CAC29145.2"/>
    <property type="status" value="JOINED"/>
    <property type="molecule type" value="Genomic_DNA"/>
</dbReference>
<dbReference type="EMBL" id="AJ309475">
    <property type="protein sequence ID" value="CAC29145.2"/>
    <property type="status" value="JOINED"/>
    <property type="molecule type" value="Genomic_DNA"/>
</dbReference>
<dbReference type="EMBL" id="AJ309476">
    <property type="protein sequence ID" value="CAC29145.2"/>
    <property type="status" value="JOINED"/>
    <property type="molecule type" value="Genomic_DNA"/>
</dbReference>
<dbReference type="EMBL" id="AJ309477">
    <property type="protein sequence ID" value="CAC29145.2"/>
    <property type="status" value="JOINED"/>
    <property type="molecule type" value="Genomic_DNA"/>
</dbReference>
<dbReference type="EMBL" id="AJ309478">
    <property type="protein sequence ID" value="CAC29145.2"/>
    <property type="status" value="JOINED"/>
    <property type="molecule type" value="Genomic_DNA"/>
</dbReference>
<dbReference type="EMBL" id="AJ309479">
    <property type="protein sequence ID" value="CAC29145.2"/>
    <property type="status" value="JOINED"/>
    <property type="molecule type" value="Genomic_DNA"/>
</dbReference>
<dbReference type="EMBL" id="AJ309480">
    <property type="protein sequence ID" value="CAC29145.2"/>
    <property type="status" value="JOINED"/>
    <property type="molecule type" value="Genomic_DNA"/>
</dbReference>
<dbReference type="EMBL" id="AJ309481">
    <property type="protein sequence ID" value="CAC29145.2"/>
    <property type="status" value="JOINED"/>
    <property type="molecule type" value="Genomic_DNA"/>
</dbReference>
<dbReference type="EMBL" id="AJ309482">
    <property type="protein sequence ID" value="CAC29145.2"/>
    <property type="status" value="JOINED"/>
    <property type="molecule type" value="Genomic_DNA"/>
</dbReference>
<dbReference type="EMBL" id="AJ309483">
    <property type="protein sequence ID" value="CAC29145.2"/>
    <property type="status" value="JOINED"/>
    <property type="molecule type" value="Genomic_DNA"/>
</dbReference>
<dbReference type="EMBL" id="AJ309484">
    <property type="protein sequence ID" value="CAC29145.2"/>
    <property type="status" value="JOINED"/>
    <property type="molecule type" value="Genomic_DNA"/>
</dbReference>
<dbReference type="EMBL" id="AJ309485">
    <property type="protein sequence ID" value="CAC29145.2"/>
    <property type="status" value="JOINED"/>
    <property type="molecule type" value="Genomic_DNA"/>
</dbReference>
<dbReference type="EMBL" id="AJ309486">
    <property type="protein sequence ID" value="CAC29145.2"/>
    <property type="status" value="JOINED"/>
    <property type="molecule type" value="Genomic_DNA"/>
</dbReference>
<dbReference type="EMBL" id="AJ309487">
    <property type="protein sequence ID" value="CAC29145.2"/>
    <property type="status" value="JOINED"/>
    <property type="molecule type" value="Genomic_DNA"/>
</dbReference>
<dbReference type="EMBL" id="AJ309466">
    <property type="protein sequence ID" value="CAC29146.2"/>
    <property type="molecule type" value="Genomic_DNA"/>
</dbReference>
<dbReference type="EMBL" id="AJ309467">
    <property type="protein sequence ID" value="CAC29146.2"/>
    <property type="status" value="JOINED"/>
    <property type="molecule type" value="Genomic_DNA"/>
</dbReference>
<dbReference type="EMBL" id="AJ309468">
    <property type="protein sequence ID" value="CAC29146.2"/>
    <property type="status" value="JOINED"/>
    <property type="molecule type" value="Genomic_DNA"/>
</dbReference>
<dbReference type="EMBL" id="AJ309469">
    <property type="protein sequence ID" value="CAC29146.2"/>
    <property type="status" value="JOINED"/>
    <property type="molecule type" value="Genomic_DNA"/>
</dbReference>
<dbReference type="EMBL" id="AJ309470">
    <property type="protein sequence ID" value="CAC29146.2"/>
    <property type="status" value="JOINED"/>
    <property type="molecule type" value="Genomic_DNA"/>
</dbReference>
<dbReference type="EMBL" id="AJ309471">
    <property type="protein sequence ID" value="CAC29146.2"/>
    <property type="status" value="JOINED"/>
    <property type="molecule type" value="Genomic_DNA"/>
</dbReference>
<dbReference type="EMBL" id="AJ309472">
    <property type="protein sequence ID" value="CAC29146.2"/>
    <property type="status" value="JOINED"/>
    <property type="molecule type" value="Genomic_DNA"/>
</dbReference>
<dbReference type="EMBL" id="AJ309473">
    <property type="protein sequence ID" value="CAC29146.2"/>
    <property type="status" value="JOINED"/>
    <property type="molecule type" value="Genomic_DNA"/>
</dbReference>
<dbReference type="EMBL" id="AJ309474">
    <property type="protein sequence ID" value="CAC29146.2"/>
    <property type="status" value="JOINED"/>
    <property type="molecule type" value="Genomic_DNA"/>
</dbReference>
<dbReference type="EMBL" id="AJ309475">
    <property type="protein sequence ID" value="CAC29146.2"/>
    <property type="status" value="JOINED"/>
    <property type="molecule type" value="Genomic_DNA"/>
</dbReference>
<dbReference type="EMBL" id="AJ309476">
    <property type="protein sequence ID" value="CAC29146.2"/>
    <property type="status" value="JOINED"/>
    <property type="molecule type" value="Genomic_DNA"/>
</dbReference>
<dbReference type="EMBL" id="AJ309477">
    <property type="protein sequence ID" value="CAC29146.2"/>
    <property type="status" value="JOINED"/>
    <property type="molecule type" value="Genomic_DNA"/>
</dbReference>
<dbReference type="EMBL" id="AJ309478">
    <property type="protein sequence ID" value="CAC29146.2"/>
    <property type="status" value="JOINED"/>
    <property type="molecule type" value="Genomic_DNA"/>
</dbReference>
<dbReference type="EMBL" id="AJ309479">
    <property type="protein sequence ID" value="CAC29146.2"/>
    <property type="status" value="JOINED"/>
    <property type="molecule type" value="Genomic_DNA"/>
</dbReference>
<dbReference type="EMBL" id="AJ309480">
    <property type="protein sequence ID" value="CAC29146.2"/>
    <property type="status" value="JOINED"/>
    <property type="molecule type" value="Genomic_DNA"/>
</dbReference>
<dbReference type="EMBL" id="AJ309481">
    <property type="protein sequence ID" value="CAC29146.2"/>
    <property type="status" value="JOINED"/>
    <property type="molecule type" value="Genomic_DNA"/>
</dbReference>
<dbReference type="EMBL" id="AJ309482">
    <property type="protein sequence ID" value="CAC29146.2"/>
    <property type="status" value="JOINED"/>
    <property type="molecule type" value="Genomic_DNA"/>
</dbReference>
<dbReference type="EMBL" id="AJ309483">
    <property type="protein sequence ID" value="CAC29146.2"/>
    <property type="status" value="JOINED"/>
    <property type="molecule type" value="Genomic_DNA"/>
</dbReference>
<dbReference type="EMBL" id="AJ309484">
    <property type="protein sequence ID" value="CAC29146.2"/>
    <property type="status" value="JOINED"/>
    <property type="molecule type" value="Genomic_DNA"/>
</dbReference>
<dbReference type="EMBL" id="AJ309485">
    <property type="protein sequence ID" value="CAC29146.2"/>
    <property type="status" value="JOINED"/>
    <property type="molecule type" value="Genomic_DNA"/>
</dbReference>
<dbReference type="EMBL" id="AJ309487">
    <property type="protein sequence ID" value="CAC29146.2"/>
    <property type="status" value="JOINED"/>
    <property type="molecule type" value="Genomic_DNA"/>
</dbReference>
<dbReference type="EMBL" id="AB014521">
    <property type="protein sequence ID" value="BAA31596.1"/>
    <property type="molecule type" value="mRNA"/>
</dbReference>
<dbReference type="CCDS" id="CCDS4277.1">
    <molecule id="Q9UNA1-1"/>
</dbReference>
<dbReference type="CCDS" id="CCDS47297.1">
    <molecule id="Q9UNA1-2"/>
</dbReference>
<dbReference type="PIR" id="F59430">
    <property type="entry name" value="F59430"/>
</dbReference>
<dbReference type="RefSeq" id="NP_001129080.1">
    <molecule id="Q9UNA1-2"/>
    <property type="nucleotide sequence ID" value="NM_001135608.3"/>
</dbReference>
<dbReference type="RefSeq" id="NP_055886.1">
    <molecule id="Q9UNA1-1"/>
    <property type="nucleotide sequence ID" value="NM_015071.6"/>
</dbReference>
<dbReference type="PDB" id="1UGV">
    <property type="method" value="NMR"/>
    <property type="chains" value="A=756-814"/>
</dbReference>
<dbReference type="PDBsum" id="1UGV"/>
<dbReference type="BMRB" id="Q9UNA1"/>
<dbReference type="SMR" id="Q9UNA1"/>
<dbReference type="BioGRID" id="116720">
    <property type="interactions" value="65"/>
</dbReference>
<dbReference type="FunCoup" id="Q9UNA1">
    <property type="interactions" value="735"/>
</dbReference>
<dbReference type="IntAct" id="Q9UNA1">
    <property type="interactions" value="42"/>
</dbReference>
<dbReference type="MINT" id="Q9UNA1"/>
<dbReference type="STRING" id="9606.ENSP00000274498"/>
<dbReference type="GlyGen" id="Q9UNA1">
    <property type="glycosylation" value="2 sites, 1 O-linked glycan (1 site)"/>
</dbReference>
<dbReference type="iPTMnet" id="Q9UNA1"/>
<dbReference type="PhosphoSitePlus" id="Q9UNA1"/>
<dbReference type="SwissPalm" id="Q9UNA1"/>
<dbReference type="BioMuta" id="ARHGAP26"/>
<dbReference type="DMDM" id="21759332"/>
<dbReference type="jPOST" id="Q9UNA1"/>
<dbReference type="MassIVE" id="Q9UNA1"/>
<dbReference type="PaxDb" id="9606-ENSP00000274498"/>
<dbReference type="PeptideAtlas" id="Q9UNA1"/>
<dbReference type="ProteomicsDB" id="85274">
    <molecule id="Q9UNA1-1"/>
</dbReference>
<dbReference type="ProteomicsDB" id="85275">
    <molecule id="Q9UNA1-2"/>
</dbReference>
<dbReference type="Pumba" id="Q9UNA1"/>
<dbReference type="Antibodypedia" id="27437">
    <property type="antibodies" value="251 antibodies from 32 providers"/>
</dbReference>
<dbReference type="DNASU" id="23092"/>
<dbReference type="Ensembl" id="ENST00000274498.9">
    <molecule id="Q9UNA1-1"/>
    <property type="protein sequence ID" value="ENSP00000274498.4"/>
    <property type="gene ID" value="ENSG00000145819.18"/>
</dbReference>
<dbReference type="Ensembl" id="ENST00000645722.2">
    <molecule id="Q9UNA1-2"/>
    <property type="protein sequence ID" value="ENSP00000495131.1"/>
    <property type="gene ID" value="ENSG00000145819.18"/>
</dbReference>
<dbReference type="GeneID" id="23092"/>
<dbReference type="KEGG" id="hsa:23092"/>
<dbReference type="MANE-Select" id="ENST00000645722.2">
    <molecule id="Q9UNA1-2"/>
    <property type="protein sequence ID" value="ENSP00000495131.1"/>
    <property type="RefSeq nucleotide sequence ID" value="NM_001135608.3"/>
    <property type="RefSeq protein sequence ID" value="NP_001129080.1"/>
</dbReference>
<dbReference type="UCSC" id="uc003lmt.4">
    <molecule id="Q9UNA1-1"/>
    <property type="organism name" value="human"/>
</dbReference>
<dbReference type="AGR" id="HGNC:17073"/>
<dbReference type="CTD" id="23092"/>
<dbReference type="DisGeNET" id="23092"/>
<dbReference type="GeneCards" id="ARHGAP26"/>
<dbReference type="HGNC" id="HGNC:17073">
    <property type="gene designation" value="ARHGAP26"/>
</dbReference>
<dbReference type="HPA" id="ENSG00000145819">
    <property type="expression patterns" value="Low tissue specificity"/>
</dbReference>
<dbReference type="MalaCards" id="ARHGAP26"/>
<dbReference type="MIM" id="605370">
    <property type="type" value="gene"/>
</dbReference>
<dbReference type="MIM" id="607785">
    <property type="type" value="phenotype"/>
</dbReference>
<dbReference type="neXtProt" id="NX_Q9UNA1"/>
<dbReference type="OpenTargets" id="ENSG00000145819"/>
<dbReference type="PharmGKB" id="PA134946198"/>
<dbReference type="VEuPathDB" id="HostDB:ENSG00000145819"/>
<dbReference type="eggNOG" id="KOG1451">
    <property type="taxonomic scope" value="Eukaryota"/>
</dbReference>
<dbReference type="GeneTree" id="ENSGT00940000157254"/>
<dbReference type="HOGENOM" id="CLU_011532_2_0_1"/>
<dbReference type="InParanoid" id="Q9UNA1"/>
<dbReference type="OMA" id="AXIFNTV"/>
<dbReference type="OrthoDB" id="9529098at2759"/>
<dbReference type="PAN-GO" id="Q9UNA1">
    <property type="GO annotations" value="1 GO annotation based on evolutionary models"/>
</dbReference>
<dbReference type="PhylomeDB" id="Q9UNA1"/>
<dbReference type="TreeFam" id="TF316851"/>
<dbReference type="PathwayCommons" id="Q9UNA1"/>
<dbReference type="Reactome" id="R-HSA-8980692">
    <property type="pathway name" value="RHOA GTPase cycle"/>
</dbReference>
<dbReference type="Reactome" id="R-HSA-9013026">
    <property type="pathway name" value="RHOB GTPase cycle"/>
</dbReference>
<dbReference type="Reactome" id="R-HSA-9013106">
    <property type="pathway name" value="RHOC GTPase cycle"/>
</dbReference>
<dbReference type="Reactome" id="R-HSA-9013148">
    <property type="pathway name" value="CDC42 GTPase cycle"/>
</dbReference>
<dbReference type="Reactome" id="R-HSA-9013149">
    <property type="pathway name" value="RAC1 GTPase cycle"/>
</dbReference>
<dbReference type="Reactome" id="R-HSA-9013404">
    <property type="pathway name" value="RAC2 GTPase cycle"/>
</dbReference>
<dbReference type="Reactome" id="R-HSA-9013405">
    <property type="pathway name" value="RHOD GTPase cycle"/>
</dbReference>
<dbReference type="Reactome" id="R-HSA-9013406">
    <property type="pathway name" value="RHOQ GTPase cycle"/>
</dbReference>
<dbReference type="Reactome" id="R-HSA-9013409">
    <property type="pathway name" value="RHOJ GTPase cycle"/>
</dbReference>
<dbReference type="Reactome" id="R-HSA-9013423">
    <property type="pathway name" value="RAC3 GTPase cycle"/>
</dbReference>
<dbReference type="SignaLink" id="Q9UNA1"/>
<dbReference type="SIGNOR" id="Q9UNA1"/>
<dbReference type="BioGRID-ORCS" id="23092">
    <property type="hits" value="14 hits in 1154 CRISPR screens"/>
</dbReference>
<dbReference type="CD-CODE" id="FB4E32DD">
    <property type="entry name" value="Presynaptic clusters and postsynaptic densities"/>
</dbReference>
<dbReference type="ChiTaRS" id="ARHGAP26">
    <property type="organism name" value="human"/>
</dbReference>
<dbReference type="EvolutionaryTrace" id="Q9UNA1"/>
<dbReference type="GeneWiki" id="ARHGAP26"/>
<dbReference type="GenomeRNAi" id="23092"/>
<dbReference type="Pharos" id="Q9UNA1">
    <property type="development level" value="Tbio"/>
</dbReference>
<dbReference type="PRO" id="PR:Q9UNA1"/>
<dbReference type="Proteomes" id="UP000005640">
    <property type="component" value="Chromosome 5"/>
</dbReference>
<dbReference type="RNAct" id="Q9UNA1">
    <property type="molecule type" value="protein"/>
</dbReference>
<dbReference type="Bgee" id="ENSG00000145819">
    <property type="expression patterns" value="Expressed in sural nerve and 186 other cell types or tissues"/>
</dbReference>
<dbReference type="ExpressionAtlas" id="Q9UNA1">
    <property type="expression patterns" value="baseline and differential"/>
</dbReference>
<dbReference type="GO" id="GO:0005856">
    <property type="term" value="C:cytoskeleton"/>
    <property type="evidence" value="ECO:0007669"/>
    <property type="project" value="UniProtKB-SubCell"/>
</dbReference>
<dbReference type="GO" id="GO:0005829">
    <property type="term" value="C:cytosol"/>
    <property type="evidence" value="ECO:0000314"/>
    <property type="project" value="UniProtKB"/>
</dbReference>
<dbReference type="GO" id="GO:0010008">
    <property type="term" value="C:endosome membrane"/>
    <property type="evidence" value="ECO:0000314"/>
    <property type="project" value="UniProtKB"/>
</dbReference>
<dbReference type="GO" id="GO:0005925">
    <property type="term" value="C:focal adhesion"/>
    <property type="evidence" value="ECO:0007669"/>
    <property type="project" value="UniProtKB-SubCell"/>
</dbReference>
<dbReference type="GO" id="GO:0005739">
    <property type="term" value="C:mitochondrion"/>
    <property type="evidence" value="ECO:0000314"/>
    <property type="project" value="UniProt"/>
</dbReference>
<dbReference type="GO" id="GO:0005096">
    <property type="term" value="F:GTPase activator activity"/>
    <property type="evidence" value="ECO:0000318"/>
    <property type="project" value="GO_Central"/>
</dbReference>
<dbReference type="GO" id="GO:0005543">
    <property type="term" value="F:phospholipid binding"/>
    <property type="evidence" value="ECO:0000314"/>
    <property type="project" value="FlyBase"/>
</dbReference>
<dbReference type="GO" id="GO:0030674">
    <property type="term" value="F:protein-macromolecule adaptor activity"/>
    <property type="evidence" value="ECO:0000314"/>
    <property type="project" value="UniProt"/>
</dbReference>
<dbReference type="GO" id="GO:0030036">
    <property type="term" value="P:actin cytoskeleton organization"/>
    <property type="evidence" value="ECO:0000303"/>
    <property type="project" value="UniProtKB"/>
</dbReference>
<dbReference type="GO" id="GO:0000423">
    <property type="term" value="P:mitophagy"/>
    <property type="evidence" value="ECO:0000314"/>
    <property type="project" value="UniProt"/>
</dbReference>
<dbReference type="GO" id="GO:0051056">
    <property type="term" value="P:regulation of small GTPase mediated signal transduction"/>
    <property type="evidence" value="ECO:0000304"/>
    <property type="project" value="Reactome"/>
</dbReference>
<dbReference type="GO" id="GO:0007165">
    <property type="term" value="P:signal transduction"/>
    <property type="evidence" value="ECO:0007669"/>
    <property type="project" value="InterPro"/>
</dbReference>
<dbReference type="CDD" id="cd01249">
    <property type="entry name" value="BAR-PH_GRAF_family"/>
    <property type="match status" value="1"/>
</dbReference>
<dbReference type="CDD" id="cd07636">
    <property type="entry name" value="BAR_GRAF"/>
    <property type="match status" value="1"/>
</dbReference>
<dbReference type="CDD" id="cd04374">
    <property type="entry name" value="RhoGAP_Graf"/>
    <property type="match status" value="1"/>
</dbReference>
<dbReference type="CDD" id="cd12064">
    <property type="entry name" value="SH3_GRAF"/>
    <property type="match status" value="1"/>
</dbReference>
<dbReference type="FunFam" id="1.10.555.10:FF:000006">
    <property type="entry name" value="Rho GTPase activating protein 26"/>
    <property type="match status" value="1"/>
</dbReference>
<dbReference type="FunFam" id="2.30.29.30:FF:000116">
    <property type="entry name" value="Rho GTPase activating protein 26"/>
    <property type="match status" value="1"/>
</dbReference>
<dbReference type="FunFam" id="1.20.1270.60:FF:000001">
    <property type="entry name" value="Rho GTPase-activating protein 26"/>
    <property type="match status" value="1"/>
</dbReference>
<dbReference type="FunFam" id="2.30.30.40:FF:000055">
    <property type="entry name" value="rho GTPase-activating protein 26 isoform X1"/>
    <property type="match status" value="1"/>
</dbReference>
<dbReference type="Gene3D" id="1.20.1270.60">
    <property type="entry name" value="Arfaptin homology (AH) domain/BAR domain"/>
    <property type="match status" value="1"/>
</dbReference>
<dbReference type="Gene3D" id="2.30.29.30">
    <property type="entry name" value="Pleckstrin-homology domain (PH domain)/Phosphotyrosine-binding domain (PTB)"/>
    <property type="match status" value="1"/>
</dbReference>
<dbReference type="Gene3D" id="1.10.555.10">
    <property type="entry name" value="Rho GTPase activation protein"/>
    <property type="match status" value="1"/>
</dbReference>
<dbReference type="Gene3D" id="2.30.30.40">
    <property type="entry name" value="SH3 Domains"/>
    <property type="match status" value="1"/>
</dbReference>
<dbReference type="InterPro" id="IPR027267">
    <property type="entry name" value="AH/BAR_dom_sf"/>
</dbReference>
<dbReference type="InterPro" id="IPR004148">
    <property type="entry name" value="BAR_dom"/>
</dbReference>
<dbReference type="InterPro" id="IPR035483">
    <property type="entry name" value="GRAF_BAR"/>
</dbReference>
<dbReference type="InterPro" id="IPR047234">
    <property type="entry name" value="GRAF_fam"/>
</dbReference>
<dbReference type="InterPro" id="IPR035481">
    <property type="entry name" value="GRAF_SH3"/>
</dbReference>
<dbReference type="InterPro" id="IPR011993">
    <property type="entry name" value="PH-like_dom_sf"/>
</dbReference>
<dbReference type="InterPro" id="IPR001849">
    <property type="entry name" value="PH_domain"/>
</dbReference>
<dbReference type="InterPro" id="IPR047225">
    <property type="entry name" value="PH_GRAF"/>
</dbReference>
<dbReference type="InterPro" id="IPR008936">
    <property type="entry name" value="Rho_GTPase_activation_prot"/>
</dbReference>
<dbReference type="InterPro" id="IPR000198">
    <property type="entry name" value="RhoGAP_dom"/>
</dbReference>
<dbReference type="InterPro" id="IPR036028">
    <property type="entry name" value="SH3-like_dom_sf"/>
</dbReference>
<dbReference type="InterPro" id="IPR001452">
    <property type="entry name" value="SH3_domain"/>
</dbReference>
<dbReference type="PANTHER" id="PTHR12552">
    <property type="entry name" value="OLIGOPHRENIN 1"/>
    <property type="match status" value="1"/>
</dbReference>
<dbReference type="PANTHER" id="PTHR12552:SF4">
    <property type="entry name" value="RHO GTPASE-ACTIVATING PROTEIN 26"/>
    <property type="match status" value="1"/>
</dbReference>
<dbReference type="Pfam" id="PF16746">
    <property type="entry name" value="BAR_3"/>
    <property type="match status" value="1"/>
</dbReference>
<dbReference type="Pfam" id="PF00169">
    <property type="entry name" value="PH"/>
    <property type="match status" value="1"/>
</dbReference>
<dbReference type="Pfam" id="PF00620">
    <property type="entry name" value="RhoGAP"/>
    <property type="match status" value="1"/>
</dbReference>
<dbReference type="Pfam" id="PF14604">
    <property type="entry name" value="SH3_9"/>
    <property type="match status" value="1"/>
</dbReference>
<dbReference type="SMART" id="SM00233">
    <property type="entry name" value="PH"/>
    <property type="match status" value="1"/>
</dbReference>
<dbReference type="SMART" id="SM00324">
    <property type="entry name" value="RhoGAP"/>
    <property type="match status" value="1"/>
</dbReference>
<dbReference type="SMART" id="SM00326">
    <property type="entry name" value="SH3"/>
    <property type="match status" value="1"/>
</dbReference>
<dbReference type="SUPFAM" id="SSF103657">
    <property type="entry name" value="BAR/IMD domain-like"/>
    <property type="match status" value="1"/>
</dbReference>
<dbReference type="SUPFAM" id="SSF48350">
    <property type="entry name" value="GTPase activation domain, GAP"/>
    <property type="match status" value="1"/>
</dbReference>
<dbReference type="SUPFAM" id="SSF50729">
    <property type="entry name" value="PH domain-like"/>
    <property type="match status" value="1"/>
</dbReference>
<dbReference type="SUPFAM" id="SSF50044">
    <property type="entry name" value="SH3-domain"/>
    <property type="match status" value="1"/>
</dbReference>
<dbReference type="PROSITE" id="PS50003">
    <property type="entry name" value="PH_DOMAIN"/>
    <property type="match status" value="1"/>
</dbReference>
<dbReference type="PROSITE" id="PS50238">
    <property type="entry name" value="RHOGAP"/>
    <property type="match status" value="1"/>
</dbReference>
<dbReference type="PROSITE" id="PS50002">
    <property type="entry name" value="SH3"/>
    <property type="match status" value="1"/>
</dbReference>